<accession>P0A9A1</accession>
<accession>P23887</accession>
<keyword id="KW-0963">Cytoplasm</keyword>
<keyword id="KW-0408">Iron</keyword>
<keyword id="KW-0409">Iron storage</keyword>
<keyword id="KW-0479">Metal-binding</keyword>
<keyword id="KW-0560">Oxidoreductase</keyword>
<keyword id="KW-1185">Reference proteome</keyword>
<dbReference type="EC" id="1.16.3.2"/>
<dbReference type="EMBL" id="AE005674">
    <property type="protein sequence ID" value="AAN43502.2"/>
    <property type="molecule type" value="Genomic_DNA"/>
</dbReference>
<dbReference type="EMBL" id="AE014073">
    <property type="protein sequence ID" value="AAP17332.1"/>
    <property type="molecule type" value="Genomic_DNA"/>
</dbReference>
<dbReference type="RefSeq" id="WP_000917208.1">
    <property type="nucleotide sequence ID" value="NZ_WPGW01000033.1"/>
</dbReference>
<dbReference type="SMR" id="P0A9A1"/>
<dbReference type="STRING" id="198214.SF1951"/>
<dbReference type="PaxDb" id="198214-SF1951"/>
<dbReference type="GeneID" id="93776210"/>
<dbReference type="KEGG" id="sfl:SF1951"/>
<dbReference type="KEGG" id="sfx:S2044"/>
<dbReference type="PATRIC" id="fig|198214.7.peg.2330"/>
<dbReference type="HOGENOM" id="CLU_065681_1_0_6"/>
<dbReference type="Proteomes" id="UP000001006">
    <property type="component" value="Chromosome"/>
</dbReference>
<dbReference type="Proteomes" id="UP000002673">
    <property type="component" value="Chromosome"/>
</dbReference>
<dbReference type="GO" id="GO:0005829">
    <property type="term" value="C:cytosol"/>
    <property type="evidence" value="ECO:0007669"/>
    <property type="project" value="TreeGrafter"/>
</dbReference>
<dbReference type="GO" id="GO:0008199">
    <property type="term" value="F:ferric iron binding"/>
    <property type="evidence" value="ECO:0007669"/>
    <property type="project" value="InterPro"/>
</dbReference>
<dbReference type="GO" id="GO:0008198">
    <property type="term" value="F:ferrous iron binding"/>
    <property type="evidence" value="ECO:0007669"/>
    <property type="project" value="TreeGrafter"/>
</dbReference>
<dbReference type="GO" id="GO:0004322">
    <property type="term" value="F:ferroxidase activity"/>
    <property type="evidence" value="ECO:0007669"/>
    <property type="project" value="TreeGrafter"/>
</dbReference>
<dbReference type="GO" id="GO:0006879">
    <property type="term" value="P:intracellular iron ion homeostasis"/>
    <property type="evidence" value="ECO:0007669"/>
    <property type="project" value="UniProtKB-KW"/>
</dbReference>
<dbReference type="GO" id="GO:0006826">
    <property type="term" value="P:iron ion transport"/>
    <property type="evidence" value="ECO:0007669"/>
    <property type="project" value="InterPro"/>
</dbReference>
<dbReference type="CDD" id="cd01055">
    <property type="entry name" value="Nonheme_Ferritin"/>
    <property type="match status" value="1"/>
</dbReference>
<dbReference type="FunFam" id="1.20.1260.10:FF:000001">
    <property type="entry name" value="Non-heme ferritin"/>
    <property type="match status" value="1"/>
</dbReference>
<dbReference type="Gene3D" id="1.20.1260.10">
    <property type="match status" value="1"/>
</dbReference>
<dbReference type="InterPro" id="IPR001519">
    <property type="entry name" value="Ferritin"/>
</dbReference>
<dbReference type="InterPro" id="IPR012347">
    <property type="entry name" value="Ferritin-like"/>
</dbReference>
<dbReference type="InterPro" id="IPR009040">
    <property type="entry name" value="Ferritin-like_diiron"/>
</dbReference>
<dbReference type="InterPro" id="IPR009078">
    <property type="entry name" value="Ferritin-like_SF"/>
</dbReference>
<dbReference type="InterPro" id="IPR008331">
    <property type="entry name" value="Ferritin_DPS_dom"/>
</dbReference>
<dbReference type="InterPro" id="IPR041719">
    <property type="entry name" value="Ferritin_prok"/>
</dbReference>
<dbReference type="NCBIfam" id="NF007638">
    <property type="entry name" value="PRK10304.1"/>
    <property type="match status" value="1"/>
</dbReference>
<dbReference type="PANTHER" id="PTHR11431:SF127">
    <property type="entry name" value="BACTERIAL NON-HEME FERRITIN"/>
    <property type="match status" value="1"/>
</dbReference>
<dbReference type="PANTHER" id="PTHR11431">
    <property type="entry name" value="FERRITIN"/>
    <property type="match status" value="1"/>
</dbReference>
<dbReference type="Pfam" id="PF00210">
    <property type="entry name" value="Ferritin"/>
    <property type="match status" value="1"/>
</dbReference>
<dbReference type="SUPFAM" id="SSF47240">
    <property type="entry name" value="Ferritin-like"/>
    <property type="match status" value="1"/>
</dbReference>
<dbReference type="PROSITE" id="PS50905">
    <property type="entry name" value="FERRITIN_LIKE"/>
    <property type="match status" value="1"/>
</dbReference>
<gene>
    <name type="primary">ftnA</name>
    <name type="ordered locus">SF1951</name>
    <name type="ordered locus">S2044</name>
</gene>
<name>FTNA_SHIFL</name>
<protein>
    <recommendedName>
        <fullName>Bacterial non-heme ferritin</fullName>
        <ecNumber>1.16.3.2</ecNumber>
    </recommendedName>
    <alternativeName>
        <fullName>Ferritin-1</fullName>
    </alternativeName>
</protein>
<proteinExistence type="inferred from homology"/>
<comment type="function">
    <text evidence="1">Iron-storage protein.</text>
</comment>
<comment type="catalytic activity">
    <reaction>
        <text>4 Fe(2+) + O2 + 6 H2O = 4 iron(III) oxide-hydroxide + 12 H(+)</text>
        <dbReference type="Rhea" id="RHEA:11972"/>
        <dbReference type="ChEBI" id="CHEBI:15377"/>
        <dbReference type="ChEBI" id="CHEBI:15378"/>
        <dbReference type="ChEBI" id="CHEBI:15379"/>
        <dbReference type="ChEBI" id="CHEBI:29033"/>
        <dbReference type="ChEBI" id="CHEBI:78619"/>
        <dbReference type="EC" id="1.16.3.2"/>
    </reaction>
</comment>
<comment type="subunit">
    <text evidence="1">Homooligomer of 24 subunits that assemble into a spherical protein shell (12 +/- 1 nM diameter) that can sequester at least 2000 iron atoms.</text>
</comment>
<comment type="subcellular location">
    <subcellularLocation>
        <location evidence="1">Cytoplasm</location>
    </subcellularLocation>
</comment>
<comment type="similarity">
    <text evidence="3">Belongs to the ferritin family. Prokaryotic subfamily.</text>
</comment>
<evidence type="ECO:0000250" key="1"/>
<evidence type="ECO:0000255" key="2">
    <source>
        <dbReference type="PROSITE-ProRule" id="PRU00085"/>
    </source>
</evidence>
<evidence type="ECO:0000305" key="3"/>
<reference key="1">
    <citation type="journal article" date="2002" name="Nucleic Acids Res.">
        <title>Genome sequence of Shigella flexneri 2a: insights into pathogenicity through comparison with genomes of Escherichia coli K12 and O157.</title>
        <authorList>
            <person name="Jin Q."/>
            <person name="Yuan Z."/>
            <person name="Xu J."/>
            <person name="Wang Y."/>
            <person name="Shen Y."/>
            <person name="Lu W."/>
            <person name="Wang J."/>
            <person name="Liu H."/>
            <person name="Yang J."/>
            <person name="Yang F."/>
            <person name="Zhang X."/>
            <person name="Zhang J."/>
            <person name="Yang G."/>
            <person name="Wu H."/>
            <person name="Qu D."/>
            <person name="Dong J."/>
            <person name="Sun L."/>
            <person name="Xue Y."/>
            <person name="Zhao A."/>
            <person name="Gao Y."/>
            <person name="Zhu J."/>
            <person name="Kan B."/>
            <person name="Ding K."/>
            <person name="Chen S."/>
            <person name="Cheng H."/>
            <person name="Yao Z."/>
            <person name="He B."/>
            <person name="Chen R."/>
            <person name="Ma D."/>
            <person name="Qiang B."/>
            <person name="Wen Y."/>
            <person name="Hou Y."/>
            <person name="Yu J."/>
        </authorList>
    </citation>
    <scope>NUCLEOTIDE SEQUENCE [LARGE SCALE GENOMIC DNA]</scope>
    <source>
        <strain>301 / Serotype 2a</strain>
    </source>
</reference>
<reference key="2">
    <citation type="journal article" date="2003" name="Infect. Immun.">
        <title>Complete genome sequence and comparative genomics of Shigella flexneri serotype 2a strain 2457T.</title>
        <authorList>
            <person name="Wei J."/>
            <person name="Goldberg M.B."/>
            <person name="Burland V."/>
            <person name="Venkatesan M.M."/>
            <person name="Deng W."/>
            <person name="Fournier G."/>
            <person name="Mayhew G.F."/>
            <person name="Plunkett G. III"/>
            <person name="Rose D.J."/>
            <person name="Darling A."/>
            <person name="Mau B."/>
            <person name="Perna N.T."/>
            <person name="Payne S.M."/>
            <person name="Runyen-Janecky L.J."/>
            <person name="Zhou S."/>
            <person name="Schwartz D.C."/>
            <person name="Blattner F.R."/>
        </authorList>
    </citation>
    <scope>NUCLEOTIDE SEQUENCE [LARGE SCALE GENOMIC DNA]</scope>
    <source>
        <strain>ATCC 700930 / 2457T / Serotype 2a</strain>
    </source>
</reference>
<sequence>MLKPEMIEKLNEQMNLELYSSLLYQQMSAWCSYHTFEGAAAFLRRHAQEEMTHMQRLFDYLTDTGNLPRINTVESPFAEYSSLDELFQETYKHEQLITQKINELAHAAMTNQDYPTFNFLQWYVSEQHEEEKLFKSIIDKLSLAGKSGEGLYFIDKELSTLDTQN</sequence>
<organism>
    <name type="scientific">Shigella flexneri</name>
    <dbReference type="NCBI Taxonomy" id="623"/>
    <lineage>
        <taxon>Bacteria</taxon>
        <taxon>Pseudomonadati</taxon>
        <taxon>Pseudomonadota</taxon>
        <taxon>Gammaproteobacteria</taxon>
        <taxon>Enterobacterales</taxon>
        <taxon>Enterobacteriaceae</taxon>
        <taxon>Shigella</taxon>
    </lineage>
</organism>
<feature type="chain" id="PRO_0000201088" description="Bacterial non-heme ferritin">
    <location>
        <begin position="1"/>
        <end position="165"/>
    </location>
</feature>
<feature type="domain" description="Ferritin-like diiron" evidence="2">
    <location>
        <begin position="1"/>
        <end position="145"/>
    </location>
</feature>
<feature type="binding site" evidence="2">
    <location>
        <position position="17"/>
    </location>
    <ligand>
        <name>Fe cation</name>
        <dbReference type="ChEBI" id="CHEBI:24875"/>
        <label>1</label>
    </ligand>
</feature>
<feature type="binding site" evidence="2">
    <location>
        <position position="49"/>
    </location>
    <ligand>
        <name>Fe cation</name>
        <dbReference type="ChEBI" id="CHEBI:24875"/>
        <label>3</label>
    </ligand>
</feature>
<feature type="binding site" evidence="2">
    <location>
        <position position="50"/>
    </location>
    <ligand>
        <name>Fe cation</name>
        <dbReference type="ChEBI" id="CHEBI:24875"/>
        <label>1</label>
    </ligand>
</feature>
<feature type="binding site" evidence="2">
    <location>
        <position position="50"/>
    </location>
    <ligand>
        <name>Fe cation</name>
        <dbReference type="ChEBI" id="CHEBI:24875"/>
        <label>2</label>
    </ligand>
</feature>
<feature type="binding site" evidence="2">
    <location>
        <position position="53"/>
    </location>
    <ligand>
        <name>Fe cation</name>
        <dbReference type="ChEBI" id="CHEBI:24875"/>
        <label>1</label>
    </ligand>
</feature>
<feature type="binding site" evidence="2">
    <location>
        <position position="94"/>
    </location>
    <ligand>
        <name>Fe cation</name>
        <dbReference type="ChEBI" id="CHEBI:24875"/>
        <label>2</label>
    </ligand>
</feature>
<feature type="binding site" evidence="2">
    <location>
        <position position="126"/>
    </location>
    <ligand>
        <name>Fe cation</name>
        <dbReference type="ChEBI" id="CHEBI:24875"/>
        <label>3</label>
    </ligand>
</feature>
<feature type="binding site" evidence="2">
    <location>
        <position position="127"/>
    </location>
    <ligand>
        <name>Fe cation</name>
        <dbReference type="ChEBI" id="CHEBI:24875"/>
        <label>2</label>
    </ligand>
</feature>
<feature type="binding site" evidence="2">
    <location>
        <position position="130"/>
    </location>
    <ligand>
        <name>Fe cation</name>
        <dbReference type="ChEBI" id="CHEBI:24875"/>
        <label>2</label>
    </ligand>
</feature>
<feature type="binding site" evidence="2">
    <location>
        <position position="130"/>
    </location>
    <ligand>
        <name>Fe cation</name>
        <dbReference type="ChEBI" id="CHEBI:24875"/>
        <label>3</label>
    </ligand>
</feature>